<reference key="1">
    <citation type="journal article" date="2003" name="Nature">
        <title>The genome sequence of the filamentous fungus Neurospora crassa.</title>
        <authorList>
            <person name="Galagan J.E."/>
            <person name="Calvo S.E."/>
            <person name="Borkovich K.A."/>
            <person name="Selker E.U."/>
            <person name="Read N.D."/>
            <person name="Jaffe D.B."/>
            <person name="FitzHugh W."/>
            <person name="Ma L.-J."/>
            <person name="Smirnov S."/>
            <person name="Purcell S."/>
            <person name="Rehman B."/>
            <person name="Elkins T."/>
            <person name="Engels R."/>
            <person name="Wang S."/>
            <person name="Nielsen C.B."/>
            <person name="Butler J."/>
            <person name="Endrizzi M."/>
            <person name="Qui D."/>
            <person name="Ianakiev P."/>
            <person name="Bell-Pedersen D."/>
            <person name="Nelson M.A."/>
            <person name="Werner-Washburne M."/>
            <person name="Selitrennikoff C.P."/>
            <person name="Kinsey J.A."/>
            <person name="Braun E.L."/>
            <person name="Zelter A."/>
            <person name="Schulte U."/>
            <person name="Kothe G.O."/>
            <person name="Jedd G."/>
            <person name="Mewes H.-W."/>
            <person name="Staben C."/>
            <person name="Marcotte E."/>
            <person name="Greenberg D."/>
            <person name="Roy A."/>
            <person name="Foley K."/>
            <person name="Naylor J."/>
            <person name="Stange-Thomann N."/>
            <person name="Barrett R."/>
            <person name="Gnerre S."/>
            <person name="Kamal M."/>
            <person name="Kamvysselis M."/>
            <person name="Mauceli E.W."/>
            <person name="Bielke C."/>
            <person name="Rudd S."/>
            <person name="Frishman D."/>
            <person name="Krystofova S."/>
            <person name="Rasmussen C."/>
            <person name="Metzenberg R.L."/>
            <person name="Perkins D.D."/>
            <person name="Kroken S."/>
            <person name="Cogoni C."/>
            <person name="Macino G."/>
            <person name="Catcheside D.E.A."/>
            <person name="Li W."/>
            <person name="Pratt R.J."/>
            <person name="Osmani S.A."/>
            <person name="DeSouza C.P.C."/>
            <person name="Glass N.L."/>
            <person name="Orbach M.J."/>
            <person name="Berglund J.A."/>
            <person name="Voelker R."/>
            <person name="Yarden O."/>
            <person name="Plamann M."/>
            <person name="Seiler S."/>
            <person name="Dunlap J.C."/>
            <person name="Radford A."/>
            <person name="Aramayo R."/>
            <person name="Natvig D.O."/>
            <person name="Alex L.A."/>
            <person name="Mannhaupt G."/>
            <person name="Ebbole D.J."/>
            <person name="Freitag M."/>
            <person name="Paulsen I."/>
            <person name="Sachs M.S."/>
            <person name="Lander E.S."/>
            <person name="Nusbaum C."/>
            <person name="Birren B.W."/>
        </authorList>
    </citation>
    <scope>NUCLEOTIDE SEQUENCE [LARGE SCALE GENOMIC DNA]</scope>
    <source>
        <strain>ATCC 24698 / 74-OR23-1A / CBS 708.71 / DSM 1257 / FGSC 987</strain>
    </source>
</reference>
<accession>Q7RVY5</accession>
<keyword id="KW-0012">Acyltransferase</keyword>
<keyword id="KW-0350">Heme biosynthesis</keyword>
<keyword id="KW-0496">Mitochondrion</keyword>
<keyword id="KW-0663">Pyridoxal phosphate</keyword>
<keyword id="KW-1185">Reference proteome</keyword>
<keyword id="KW-0808">Transferase</keyword>
<keyword id="KW-0809">Transit peptide</keyword>
<comment type="function">
    <text evidence="1">Catalyzes the synthesis of 5-aminolevulinate (ALA) from succinyl-CoA and glycine, the first and rate-limiting step in heme biosynthesis.</text>
</comment>
<comment type="catalytic activity">
    <reaction evidence="1">
        <text>succinyl-CoA + glycine + H(+) = 5-aminolevulinate + CO2 + CoA</text>
        <dbReference type="Rhea" id="RHEA:12921"/>
        <dbReference type="ChEBI" id="CHEBI:15378"/>
        <dbReference type="ChEBI" id="CHEBI:16526"/>
        <dbReference type="ChEBI" id="CHEBI:57287"/>
        <dbReference type="ChEBI" id="CHEBI:57292"/>
        <dbReference type="ChEBI" id="CHEBI:57305"/>
        <dbReference type="ChEBI" id="CHEBI:356416"/>
        <dbReference type="EC" id="2.3.1.37"/>
    </reaction>
</comment>
<comment type="cofactor">
    <cofactor evidence="1">
        <name>pyridoxal 5'-phosphate</name>
        <dbReference type="ChEBI" id="CHEBI:597326"/>
    </cofactor>
</comment>
<comment type="pathway">
    <text evidence="1">Porphyrin-containing compound metabolism; protoporphyrin-IX biosynthesis; 5-aminolevulinate from glycine: step 1/1.</text>
</comment>
<comment type="subunit">
    <text evidence="1">Homodimer.</text>
</comment>
<comment type="subcellular location">
    <subcellularLocation>
        <location evidence="1">Mitochondrion matrix</location>
    </subcellularLocation>
</comment>
<comment type="similarity">
    <text evidence="4">Belongs to the class-II pyridoxal-phosphate-dependent aminotransferase family.</text>
</comment>
<proteinExistence type="inferred from homology"/>
<dbReference type="EC" id="2.3.1.37"/>
<dbReference type="EMBL" id="CM002238">
    <property type="protein sequence ID" value="EAA33765.2"/>
    <property type="molecule type" value="Genomic_DNA"/>
</dbReference>
<dbReference type="RefSeq" id="XP_963001.2">
    <property type="nucleotide sequence ID" value="XM_957908.3"/>
</dbReference>
<dbReference type="SMR" id="Q7RVY5"/>
<dbReference type="FunCoup" id="Q7RVY5">
    <property type="interactions" value="462"/>
</dbReference>
<dbReference type="STRING" id="367110.Q7RVY5"/>
<dbReference type="PaxDb" id="5141-EFNCRP00000006015"/>
<dbReference type="EnsemblFungi" id="EAA33765">
    <property type="protein sequence ID" value="EAA33765"/>
    <property type="gene ID" value="NCU06189"/>
</dbReference>
<dbReference type="GeneID" id="3879149"/>
<dbReference type="KEGG" id="ncr:NCU06189"/>
<dbReference type="VEuPathDB" id="FungiDB:NCU06189"/>
<dbReference type="HOGENOM" id="CLU_015846_6_0_1"/>
<dbReference type="InParanoid" id="Q7RVY5"/>
<dbReference type="OMA" id="ARRCPIM"/>
<dbReference type="OrthoDB" id="10263824at2759"/>
<dbReference type="UniPathway" id="UPA00251">
    <property type="reaction ID" value="UER00375"/>
</dbReference>
<dbReference type="Proteomes" id="UP000001805">
    <property type="component" value="Chromosome 3, Linkage Group III"/>
</dbReference>
<dbReference type="GO" id="GO:0005759">
    <property type="term" value="C:mitochondrial matrix"/>
    <property type="evidence" value="ECO:0007669"/>
    <property type="project" value="UniProtKB-SubCell"/>
</dbReference>
<dbReference type="GO" id="GO:0005739">
    <property type="term" value="C:mitochondrion"/>
    <property type="evidence" value="ECO:0000318"/>
    <property type="project" value="GO_Central"/>
</dbReference>
<dbReference type="GO" id="GO:0003870">
    <property type="term" value="F:5-aminolevulinate synthase activity"/>
    <property type="evidence" value="ECO:0000318"/>
    <property type="project" value="GO_Central"/>
</dbReference>
<dbReference type="GO" id="GO:0030170">
    <property type="term" value="F:pyridoxal phosphate binding"/>
    <property type="evidence" value="ECO:0007669"/>
    <property type="project" value="InterPro"/>
</dbReference>
<dbReference type="GO" id="GO:0006783">
    <property type="term" value="P:heme biosynthetic process"/>
    <property type="evidence" value="ECO:0000318"/>
    <property type="project" value="GO_Central"/>
</dbReference>
<dbReference type="GO" id="GO:1902117">
    <property type="term" value="P:positive regulation of organelle assembly"/>
    <property type="evidence" value="ECO:0007669"/>
    <property type="project" value="EnsemblFungi"/>
</dbReference>
<dbReference type="GO" id="GO:0006782">
    <property type="term" value="P:protoporphyrinogen IX biosynthetic process"/>
    <property type="evidence" value="ECO:0007669"/>
    <property type="project" value="UniProtKB-UniPathway"/>
</dbReference>
<dbReference type="CDD" id="cd06454">
    <property type="entry name" value="KBL_like"/>
    <property type="match status" value="1"/>
</dbReference>
<dbReference type="FunFam" id="3.40.640.10:FF:000006">
    <property type="entry name" value="5-aminolevulinate synthase, mitochondrial"/>
    <property type="match status" value="1"/>
</dbReference>
<dbReference type="Gene3D" id="3.90.1150.10">
    <property type="entry name" value="Aspartate Aminotransferase, domain 1"/>
    <property type="match status" value="1"/>
</dbReference>
<dbReference type="Gene3D" id="3.40.640.10">
    <property type="entry name" value="Type I PLP-dependent aspartate aminotransferase-like (Major domain)"/>
    <property type="match status" value="1"/>
</dbReference>
<dbReference type="InterPro" id="IPR010961">
    <property type="entry name" value="4pyrrol_synth_NH2levulA_synth"/>
</dbReference>
<dbReference type="InterPro" id="IPR001917">
    <property type="entry name" value="Aminotrans_II_pyridoxalP_BS"/>
</dbReference>
<dbReference type="InterPro" id="IPR004839">
    <property type="entry name" value="Aminotransferase_I/II_large"/>
</dbReference>
<dbReference type="InterPro" id="IPR050087">
    <property type="entry name" value="AON_synthase_class-II"/>
</dbReference>
<dbReference type="InterPro" id="IPR015424">
    <property type="entry name" value="PyrdxlP-dep_Trfase"/>
</dbReference>
<dbReference type="InterPro" id="IPR015421">
    <property type="entry name" value="PyrdxlP-dep_Trfase_major"/>
</dbReference>
<dbReference type="InterPro" id="IPR015422">
    <property type="entry name" value="PyrdxlP-dep_Trfase_small"/>
</dbReference>
<dbReference type="NCBIfam" id="TIGR01821">
    <property type="entry name" value="5aminolev_synth"/>
    <property type="match status" value="1"/>
</dbReference>
<dbReference type="PANTHER" id="PTHR13693:SF102">
    <property type="entry name" value="2-AMINO-3-KETOBUTYRATE COENZYME A LIGASE, MITOCHONDRIAL"/>
    <property type="match status" value="1"/>
</dbReference>
<dbReference type="PANTHER" id="PTHR13693">
    <property type="entry name" value="CLASS II AMINOTRANSFERASE/8-AMINO-7-OXONONANOATE SYNTHASE"/>
    <property type="match status" value="1"/>
</dbReference>
<dbReference type="Pfam" id="PF00155">
    <property type="entry name" value="Aminotran_1_2"/>
    <property type="match status" value="1"/>
</dbReference>
<dbReference type="SUPFAM" id="SSF53383">
    <property type="entry name" value="PLP-dependent transferases"/>
    <property type="match status" value="1"/>
</dbReference>
<dbReference type="PROSITE" id="PS00599">
    <property type="entry name" value="AA_TRANSFER_CLASS_2"/>
    <property type="match status" value="1"/>
</dbReference>
<organism>
    <name type="scientific">Neurospora crassa (strain ATCC 24698 / 74-OR23-1A / CBS 708.71 / DSM 1257 / FGSC 987)</name>
    <dbReference type="NCBI Taxonomy" id="367110"/>
    <lineage>
        <taxon>Eukaryota</taxon>
        <taxon>Fungi</taxon>
        <taxon>Dikarya</taxon>
        <taxon>Ascomycota</taxon>
        <taxon>Pezizomycotina</taxon>
        <taxon>Sordariomycetes</taxon>
        <taxon>Sordariomycetidae</taxon>
        <taxon>Sordariales</taxon>
        <taxon>Sordariaceae</taxon>
        <taxon>Neurospora</taxon>
    </lineage>
</organism>
<feature type="transit peptide" description="Mitochondrion" evidence="3">
    <location>
        <begin position="1"/>
        <end position="69"/>
    </location>
</feature>
<feature type="chain" id="PRO_0000001242" description="5-aminolevulinate synthase, mitochondrial">
    <location>
        <begin position="70"/>
        <end position="629"/>
    </location>
</feature>
<feature type="active site" evidence="2">
    <location>
        <position position="391"/>
    </location>
</feature>
<feature type="binding site" evidence="2">
    <location>
        <position position="155"/>
    </location>
    <ligand>
        <name>substrate</name>
    </ligand>
</feature>
<feature type="binding site" evidence="2">
    <location>
        <position position="268"/>
    </location>
    <ligand>
        <name>substrate</name>
    </ligand>
</feature>
<feature type="binding site" evidence="2">
    <location>
        <position position="287"/>
    </location>
    <ligand>
        <name>substrate</name>
    </ligand>
</feature>
<feature type="binding site" description="in other chain" evidence="2">
    <location>
        <position position="320"/>
    </location>
    <ligand>
        <name>pyridoxal 5'-phosphate</name>
        <dbReference type="ChEBI" id="CHEBI:597326"/>
        <note>ligand shared between dimeric partners</note>
    </ligand>
</feature>
<feature type="binding site" description="in other chain" evidence="2">
    <location>
        <position position="348"/>
    </location>
    <ligand>
        <name>pyridoxal 5'-phosphate</name>
        <dbReference type="ChEBI" id="CHEBI:597326"/>
        <note>ligand shared between dimeric partners</note>
    </ligand>
</feature>
<feature type="binding site" description="in other chain" evidence="2">
    <location>
        <position position="388"/>
    </location>
    <ligand>
        <name>pyridoxal 5'-phosphate</name>
        <dbReference type="ChEBI" id="CHEBI:597326"/>
        <note>ligand shared between dimeric partners</note>
    </ligand>
</feature>
<feature type="binding site" evidence="2">
    <location>
        <position position="420"/>
    </location>
    <ligand>
        <name>pyridoxal 5'-phosphate</name>
        <dbReference type="ChEBI" id="CHEBI:597326"/>
        <note>ligand shared between dimeric partners</note>
    </ligand>
</feature>
<feature type="binding site" evidence="2">
    <location>
        <position position="421"/>
    </location>
    <ligand>
        <name>pyridoxal 5'-phosphate</name>
        <dbReference type="ChEBI" id="CHEBI:597326"/>
        <note>ligand shared between dimeric partners</note>
    </ligand>
</feature>
<feature type="binding site" evidence="2">
    <location>
        <position position="506"/>
    </location>
    <ligand>
        <name>substrate</name>
    </ligand>
</feature>
<feature type="modified residue" description="N6-(pyridoxal phosphate)lysine" evidence="2">
    <location>
        <position position="391"/>
    </location>
</feature>
<name>HEM1_NEUCR</name>
<gene>
    <name type="primary">alv-1</name>
    <name type="synonym">hem1</name>
    <name type="ORF">NCU06189</name>
</gene>
<protein>
    <recommendedName>
        <fullName>5-aminolevulinate synthase, mitochondrial</fullName>
        <ecNumber>2.3.1.37</ecNumber>
    </recommendedName>
    <alternativeName>
        <fullName>5-aminolevulinic acid synthase</fullName>
    </alternativeName>
    <alternativeName>
        <fullName>Delta-ALA synthase</fullName>
    </alternativeName>
    <alternativeName>
        <fullName>Delta-aminolevulinate synthase</fullName>
    </alternativeName>
</protein>
<evidence type="ECO:0000250" key="1">
    <source>
        <dbReference type="UniProtKB" id="P09950"/>
    </source>
</evidence>
<evidence type="ECO:0000250" key="2">
    <source>
        <dbReference type="UniProtKB" id="P18079"/>
    </source>
</evidence>
<evidence type="ECO:0000255" key="3"/>
<evidence type="ECO:0000305" key="4"/>
<sequence length="629" mass="67447">MDSVLRQSKAVCPFMKKATASSLRAMTTAARPAASPCGGAISKLQVLAHRCPVMGKAMAVQSARTGGRASAAPASFVHKAKLHTGRPREAQAVEGVFTGQKAGLPPHPPVKPTTATAANPSPAACTVSGNFGTKFNYEKFYENELEKKHKDKSYRYFNNINRLAKDFPRAHMATKEEKVAVWCANDYLGMGRNKHVLEAMHTTLDEYGAGAGGTRNISGHNKHAVELENSLAKLHATDAALVFSSCYVANDATLATLGSKLPDCVILSDSLNHASMIQGIRHSGAKKIIFKHNDVEDLEKKLAALPLHIPKIIAFESVYSMCGSIGPIEKFCDLAEKYGAITFNDEVHAVGMYGPHGAGVAEHLDWEAHQRGETKGTIADRIDIYSGTLGKAYGCVGGYIAGSAKLVDTIRSLAPGFIFTTTLPPAVMAGARAAIEYQMSYDGDRRLQQLHTRAVKEALADRDIPVIPNPSHIIPILVGNAELAKKASDKLLNDHQIYVQSINYPTVPVGQERLRITPTPGHTKQFRDHLVAALDSIWTELGIKRTSDWAAEGGFIGVGEAEAEPVAPLWTDEQLGIADAVAELRAQASDEKKGVINQLLESVALEQEREALNAAEEVADAAKAAAASA</sequence>